<keyword id="KW-0903">Direct protein sequencing</keyword>
<keyword id="KW-1015">Disulfide bond</keyword>
<keyword id="KW-0349">Heme</keyword>
<keyword id="KW-0408">Iron</keyword>
<keyword id="KW-0479">Metal-binding</keyword>
<keyword id="KW-0561">Oxygen transport</keyword>
<keyword id="KW-0964">Secreted</keyword>
<keyword id="KW-0813">Transport</keyword>
<evidence type="ECO:0000255" key="1">
    <source>
        <dbReference type="PROSITE-ProRule" id="PRU00238"/>
    </source>
</evidence>
<evidence type="ECO:0000269" key="2">
    <source>
    </source>
</evidence>
<evidence type="ECO:0000305" key="3"/>
<organism>
    <name type="scientific">Metaphire hilgendorfi</name>
    <name type="common">Earthworm</name>
    <name type="synonym">Pheretima hilgendorfi</name>
    <dbReference type="NCBI Taxonomy" id="506675"/>
    <lineage>
        <taxon>Eukaryota</taxon>
        <taxon>Metazoa</taxon>
        <taxon>Spiralia</taxon>
        <taxon>Lophotrochozoa</taxon>
        <taxon>Annelida</taxon>
        <taxon>Clitellata</taxon>
        <taxon>Oligochaeta</taxon>
        <taxon>Crassiclitellata</taxon>
        <taxon>Megascolecida</taxon>
        <taxon>Megascolecidae</taxon>
        <taxon>Metaphire</taxon>
    </lineage>
</organism>
<sequence>ECDVLERFKVKHQWQTVFSEAHRTEFSLHFWKEFLHDHPSLVELFTRVNGANIYSPEFQAHGIRVLAGLDSVIGVLDEIPTLTVQLAHLKAQHTERGTKPEYFDLFGKHLASHLGDELGTHFDYAAFRDCYDFIASGIKP</sequence>
<protein>
    <recommendedName>
        <fullName>Extracellular globin-1</fullName>
    </recommendedName>
    <alternativeName>
        <fullName>Erythrocruorin</fullName>
    </alternativeName>
    <alternativeName>
        <fullName>Globin I</fullName>
    </alternativeName>
</protein>
<dbReference type="SMR" id="P83122"/>
<dbReference type="GO" id="GO:0005576">
    <property type="term" value="C:extracellular region"/>
    <property type="evidence" value="ECO:0007669"/>
    <property type="project" value="UniProtKB-SubCell"/>
</dbReference>
<dbReference type="GO" id="GO:0005833">
    <property type="term" value="C:hemoglobin complex"/>
    <property type="evidence" value="ECO:0007669"/>
    <property type="project" value="InterPro"/>
</dbReference>
<dbReference type="GO" id="GO:0020037">
    <property type="term" value="F:heme binding"/>
    <property type="evidence" value="ECO:0007669"/>
    <property type="project" value="InterPro"/>
</dbReference>
<dbReference type="GO" id="GO:0005506">
    <property type="term" value="F:iron ion binding"/>
    <property type="evidence" value="ECO:0007669"/>
    <property type="project" value="InterPro"/>
</dbReference>
<dbReference type="GO" id="GO:0019825">
    <property type="term" value="F:oxygen binding"/>
    <property type="evidence" value="ECO:0007669"/>
    <property type="project" value="InterPro"/>
</dbReference>
<dbReference type="GO" id="GO:0005344">
    <property type="term" value="F:oxygen carrier activity"/>
    <property type="evidence" value="ECO:0007669"/>
    <property type="project" value="UniProtKB-KW"/>
</dbReference>
<dbReference type="CDD" id="cd01040">
    <property type="entry name" value="Mb-like"/>
    <property type="match status" value="1"/>
</dbReference>
<dbReference type="Gene3D" id="1.10.490.10">
    <property type="entry name" value="Globins"/>
    <property type="match status" value="1"/>
</dbReference>
<dbReference type="InterPro" id="IPR000971">
    <property type="entry name" value="Globin"/>
</dbReference>
<dbReference type="InterPro" id="IPR009050">
    <property type="entry name" value="Globin-like_sf"/>
</dbReference>
<dbReference type="InterPro" id="IPR012292">
    <property type="entry name" value="Globin/Proto"/>
</dbReference>
<dbReference type="InterPro" id="IPR014610">
    <property type="entry name" value="Haemoglobin_extracell"/>
</dbReference>
<dbReference type="InterPro" id="IPR044399">
    <property type="entry name" value="Mb-like_M"/>
</dbReference>
<dbReference type="PANTHER" id="PTHR47217">
    <property type="entry name" value="GLOBIN-LIKE PROTEIN"/>
    <property type="match status" value="1"/>
</dbReference>
<dbReference type="PANTHER" id="PTHR47217:SF1">
    <property type="entry name" value="GLOBIN-LIKE PROTEIN"/>
    <property type="match status" value="1"/>
</dbReference>
<dbReference type="Pfam" id="PF00042">
    <property type="entry name" value="Globin"/>
    <property type="match status" value="1"/>
</dbReference>
<dbReference type="PIRSF" id="PIRSF036517">
    <property type="entry name" value="Ext_hemo"/>
    <property type="match status" value="1"/>
</dbReference>
<dbReference type="SUPFAM" id="SSF46458">
    <property type="entry name" value="Globin-like"/>
    <property type="match status" value="1"/>
</dbReference>
<dbReference type="PROSITE" id="PS01033">
    <property type="entry name" value="GLOBIN"/>
    <property type="match status" value="1"/>
</dbReference>
<comment type="subunit">
    <text evidence="2">The giant hemoglobins of worms are formed of a monomeric subunit and a disulfide-bonded trimer. This subunit is monomeric.</text>
</comment>
<comment type="subcellular location">
    <subcellularLocation>
        <location>Secreted</location>
    </subcellularLocation>
</comment>
<comment type="similarity">
    <text evidence="1">Belongs to the globin family.</text>
</comment>
<feature type="chain" id="PRO_0000052507" description="Extracellular globin-1">
    <location>
        <begin position="1"/>
        <end position="140"/>
    </location>
</feature>
<feature type="domain" description="Globin" evidence="1">
    <location>
        <begin position="1"/>
        <end position="140"/>
    </location>
</feature>
<feature type="binding site" description="proximal binding residue" evidence="1">
    <location>
        <position position="93"/>
    </location>
    <ligand>
        <name>heme b</name>
        <dbReference type="ChEBI" id="CHEBI:60344"/>
    </ligand>
    <ligandPart>
        <name>Fe</name>
        <dbReference type="ChEBI" id="CHEBI:18248"/>
    </ligandPart>
</feature>
<feature type="disulfide bond" evidence="2">
    <location>
        <begin position="2"/>
        <end position="130"/>
    </location>
</feature>
<reference evidence="3" key="1">
    <citation type="journal article" date="1996" name="Zool. Sci.">
        <title>Amino acid sequence of the monomer subunit of the extracellular hemoglobin of the earthworm, Pheretima hilgendorfi.</title>
        <authorList>
            <person name="Shishikura F."/>
        </authorList>
    </citation>
    <scope>PROTEIN SEQUENCE</scope>
    <scope>SUBUNIT</scope>
    <scope>DISULFIDE BOND</scope>
    <source>
        <tissue>Blood</tissue>
    </source>
</reference>
<name>GLB1_METHI</name>
<accession>P83122</accession>
<proteinExistence type="evidence at protein level"/>